<accession>Q2QLH8</accession>
<organism>
    <name type="scientific">Otolemur garnettii</name>
    <name type="common">Small-eared galago</name>
    <name type="synonym">Garnett's greater bushbaby</name>
    <dbReference type="NCBI Taxonomy" id="30611"/>
    <lineage>
        <taxon>Eukaryota</taxon>
        <taxon>Metazoa</taxon>
        <taxon>Chordata</taxon>
        <taxon>Craniata</taxon>
        <taxon>Vertebrata</taxon>
        <taxon>Euteleostomi</taxon>
        <taxon>Mammalia</taxon>
        <taxon>Eutheria</taxon>
        <taxon>Euarchontoglires</taxon>
        <taxon>Primates</taxon>
        <taxon>Strepsirrhini</taxon>
        <taxon>Lorisiformes</taxon>
        <taxon>Galagidae</taxon>
        <taxon>Otolemur</taxon>
    </lineage>
</organism>
<comment type="function">
    <text evidence="1">May act as a scaffolding protein within caveolar membranes. Interacts directly with G-protein alpha subunits and can functionally regulate their activity. Acts as an accessory protein in conjunction with CAV1 in targeting to lipid rafts and driving caveolae formation. The Ser-36 phosphorylated form has a role in modulating mitosis in endothelial cells. Positive regulator of cellular mitogenesis of the MAPK signaling pathway. Required for the insulin-stimulated nuclear translocation and activation of MAPK1 and STAT3, and the subsequent regulation of cell cycle progression (By similarity).</text>
</comment>
<comment type="subunit">
    <text evidence="1">Monomer or homodimer (By similarity). Interacts with CAV1; the interaction forms a stable heterooligomeric complex that is required for targeting to lipid rafts and for caveolae formation. Tyrosine phosphorylated forms do not form heterooligomers with the Tyr-19-phosphorylated form existing as a monomer or dimer, and the Tyr-27-form as a monomer only. Interacts (tyrosine phosphorylated form) with the SH2 domain-containing proteins, RASA1, NCK1 and SRC. Interacts (tyrosine phosphorylated form) with INSR, the interaction (Tyr-27-phosphorylated form) is increased on insulin stimulation. Interacts (Tyr-19 phosphorylated form) with MAPK1 (phosphorylated form); the interaction, promoted by insulin, leads to nuclear location and MAPK1 activation. Interacts with STAT3; the interaction is increased on insulin-induced tyrosine phosphorylation leading to STAT activation (By similarity).</text>
</comment>
<comment type="subcellular location">
    <subcellularLocation>
        <location evidence="1">Nucleus</location>
    </subcellularLocation>
    <subcellularLocation>
        <location evidence="1">Cytoplasm</location>
    </subcellularLocation>
    <subcellularLocation>
        <location>Golgi apparatus membrane</location>
        <topology>Peripheral membrane protein</topology>
    </subcellularLocation>
    <subcellularLocation>
        <location>Cell membrane</location>
        <topology>Peripheral membrane protein</topology>
    </subcellularLocation>
    <subcellularLocation>
        <location>Membrane</location>
        <location>Caveola</location>
        <topology>Peripheral membrane protein</topology>
    </subcellularLocation>
    <text evidence="1">Potential hairpin-like structure in the membrane. Membrane protein of caveolae. Tyr-19-phosphorylated form is enriched at sites of cell-cell contact and is translocated to the nucleus in complex with MAPK1 in response to insulin (By similarity). Tyr-27-phosphorylated form is located both in the cytoplasm and plasma membrane. CAV1-mediated Ser-23-phosphorylated form locates to the plasma membrane. Ser-36-phosphorylated form resides in intracellular compartments.</text>
</comment>
<comment type="PTM">
    <text evidence="1">Phosphorylated on serine and tyrosine residues. CAV1 promotes phosphorylation on Ser-23 which then targets the complex to the plasma membrane, lipid rafts and caveolae. Phosphorylation on Ser-36 appears to modulate mitosis in endothelial cells (By similarity). Phosphorylation on both Tyr-19 and Tyr-27 is required for insulin-induced 'Ser-727' phosphorylation of STAT3 and its activation. Phosphorylation on Tyr-19 is required for insulin-induced phosphorylation of MAPK1 and DNA binding of STAT3. Tyrosine phosphorylation is induced by both EGF and insulin (By. similarity).</text>
</comment>
<comment type="similarity">
    <text evidence="5">Belongs to the caveolin family.</text>
</comment>
<name>CAV2_OTOGA</name>
<proteinExistence type="inferred from homology"/>
<protein>
    <recommendedName>
        <fullName>Caveolin-2</fullName>
    </recommendedName>
</protein>
<reference key="1">
    <citation type="submission" date="2011-03" db="EMBL/GenBank/DDBJ databases">
        <title>Version 3 of the genome sequence of Otolemur garnettii(Bushbaby).</title>
        <authorList>
            <consortium name="The Broad Institute Genome Sequencing Platform"/>
            <person name="Di Palma F."/>
            <person name="Johnson J."/>
            <person name="Lander E.S."/>
            <person name="Lindblad-Toh K."/>
            <person name="Jaffe D.B."/>
            <person name="Gnerre S."/>
            <person name="MacCallum I."/>
            <person name="Przybylski D."/>
            <person name="Ribeiro F.J."/>
            <person name="Burton J.N."/>
            <person name="Walker B.J."/>
            <person name="Sharpe T."/>
            <person name="Hall G."/>
        </authorList>
    </citation>
    <scope>NUCLEOTIDE SEQUENCE [LARGE SCALE GENOMIC DNA]</scope>
</reference>
<keyword id="KW-1003">Cell membrane</keyword>
<keyword id="KW-0963">Cytoplasm</keyword>
<keyword id="KW-0333">Golgi apparatus</keyword>
<keyword id="KW-0472">Membrane</keyword>
<keyword id="KW-0539">Nucleus</keyword>
<keyword id="KW-0597">Phosphoprotein</keyword>
<keyword id="KW-1185">Reference proteome</keyword>
<feature type="chain" id="PRO_0000226342" description="Caveolin-2">
    <location>
        <begin position="1"/>
        <end position="162"/>
    </location>
</feature>
<feature type="topological domain" description="Cytoplasmic" evidence="4">
    <location>
        <begin position="1"/>
        <end position="86"/>
    </location>
</feature>
<feature type="intramembrane region" description="Helical" evidence="4">
    <location>
        <begin position="87"/>
        <end position="107"/>
    </location>
</feature>
<feature type="topological domain" description="Cytoplasmic" evidence="4">
    <location>
        <begin position="108"/>
        <end position="162"/>
    </location>
</feature>
<feature type="modified residue" description="Phosphotyrosine; by SRC" evidence="2">
    <location>
        <position position="19"/>
    </location>
</feature>
<feature type="modified residue" description="Phosphoserine" evidence="3">
    <location>
        <position position="20"/>
    </location>
</feature>
<feature type="modified residue" description="Phosphoserine" evidence="2">
    <location>
        <position position="23"/>
    </location>
</feature>
<feature type="modified residue" description="Phosphotyrosine; by SRC" evidence="2">
    <location>
        <position position="27"/>
    </location>
</feature>
<feature type="modified residue" description="Phosphoserine" evidence="2">
    <location>
        <position position="36"/>
    </location>
</feature>
<dbReference type="EMBL" id="DP000013">
    <property type="protein sequence ID" value="ABA90400.1"/>
    <property type="molecule type" value="Genomic_DNA"/>
</dbReference>
<dbReference type="SMR" id="Q2QLH8"/>
<dbReference type="FunCoup" id="Q2QLH8">
    <property type="interactions" value="861"/>
</dbReference>
<dbReference type="STRING" id="30611.ENSOGAP00000018222"/>
<dbReference type="eggNOG" id="ENOG502RZYX">
    <property type="taxonomic scope" value="Eukaryota"/>
</dbReference>
<dbReference type="InParanoid" id="Q2QLH8"/>
<dbReference type="Proteomes" id="UP000005225">
    <property type="component" value="Unassembled WGS sequence"/>
</dbReference>
<dbReference type="GO" id="GO:0005901">
    <property type="term" value="C:caveola"/>
    <property type="evidence" value="ECO:0000250"/>
    <property type="project" value="UniProtKB"/>
</dbReference>
<dbReference type="GO" id="GO:0031410">
    <property type="term" value="C:cytoplasmic vesicle"/>
    <property type="evidence" value="ECO:0007669"/>
    <property type="project" value="TreeGrafter"/>
</dbReference>
<dbReference type="GO" id="GO:0005925">
    <property type="term" value="C:focal adhesion"/>
    <property type="evidence" value="ECO:0007669"/>
    <property type="project" value="TreeGrafter"/>
</dbReference>
<dbReference type="GO" id="GO:0000139">
    <property type="term" value="C:Golgi membrane"/>
    <property type="evidence" value="ECO:0007669"/>
    <property type="project" value="UniProtKB-SubCell"/>
</dbReference>
<dbReference type="GO" id="GO:0005634">
    <property type="term" value="C:nucleus"/>
    <property type="evidence" value="ECO:0007669"/>
    <property type="project" value="UniProtKB-SubCell"/>
</dbReference>
<dbReference type="GO" id="GO:0048471">
    <property type="term" value="C:perinuclear region of cytoplasm"/>
    <property type="evidence" value="ECO:0000250"/>
    <property type="project" value="UniProtKB"/>
</dbReference>
<dbReference type="GO" id="GO:0044853">
    <property type="term" value="C:plasma membrane raft"/>
    <property type="evidence" value="ECO:0000250"/>
    <property type="project" value="UniProtKB"/>
</dbReference>
<dbReference type="GO" id="GO:0042383">
    <property type="term" value="C:sarcolemma"/>
    <property type="evidence" value="ECO:0007669"/>
    <property type="project" value="TreeGrafter"/>
</dbReference>
<dbReference type="GO" id="GO:0031748">
    <property type="term" value="F:D1 dopamine receptor binding"/>
    <property type="evidence" value="ECO:0000250"/>
    <property type="project" value="UniProtKB"/>
</dbReference>
<dbReference type="GO" id="GO:0060090">
    <property type="term" value="F:molecular adaptor activity"/>
    <property type="evidence" value="ECO:0007669"/>
    <property type="project" value="TreeGrafter"/>
</dbReference>
<dbReference type="GO" id="GO:0019901">
    <property type="term" value="F:protein kinase binding"/>
    <property type="evidence" value="ECO:0007669"/>
    <property type="project" value="TreeGrafter"/>
</dbReference>
<dbReference type="GO" id="GO:0070836">
    <property type="term" value="P:caveola assembly"/>
    <property type="evidence" value="ECO:0000250"/>
    <property type="project" value="UniProtKB"/>
</dbReference>
<dbReference type="GO" id="GO:0007029">
    <property type="term" value="P:endoplasmic reticulum organization"/>
    <property type="evidence" value="ECO:0000250"/>
    <property type="project" value="UniProtKB"/>
</dbReference>
<dbReference type="GO" id="GO:0008286">
    <property type="term" value="P:insulin receptor signaling pathway"/>
    <property type="evidence" value="ECO:0007669"/>
    <property type="project" value="TreeGrafter"/>
</dbReference>
<dbReference type="GO" id="GO:0007005">
    <property type="term" value="P:mitochondrion organization"/>
    <property type="evidence" value="ECO:0000250"/>
    <property type="project" value="UniProtKB"/>
</dbReference>
<dbReference type="GO" id="GO:0001937">
    <property type="term" value="P:negative regulation of endothelial cell proliferation"/>
    <property type="evidence" value="ECO:0000250"/>
    <property type="project" value="UniProtKB"/>
</dbReference>
<dbReference type="GO" id="GO:0060161">
    <property type="term" value="P:positive regulation of dopamine receptor signaling pathway"/>
    <property type="evidence" value="ECO:0000250"/>
    <property type="project" value="UniProtKB"/>
</dbReference>
<dbReference type="GO" id="GO:0051480">
    <property type="term" value="P:regulation of cytosolic calcium ion concentration"/>
    <property type="evidence" value="ECO:0007669"/>
    <property type="project" value="TreeGrafter"/>
</dbReference>
<dbReference type="GO" id="GO:0048741">
    <property type="term" value="P:skeletal muscle fiber development"/>
    <property type="evidence" value="ECO:0000250"/>
    <property type="project" value="UniProtKB"/>
</dbReference>
<dbReference type="GO" id="GO:0048278">
    <property type="term" value="P:vesicle docking"/>
    <property type="evidence" value="ECO:0000250"/>
    <property type="project" value="UniProtKB"/>
</dbReference>
<dbReference type="GO" id="GO:0006906">
    <property type="term" value="P:vesicle fusion"/>
    <property type="evidence" value="ECO:0000250"/>
    <property type="project" value="UniProtKB"/>
</dbReference>
<dbReference type="InterPro" id="IPR001612">
    <property type="entry name" value="Caveolin"/>
</dbReference>
<dbReference type="InterPro" id="IPR018361">
    <property type="entry name" value="Caveolin_CS"/>
</dbReference>
<dbReference type="PANTHER" id="PTHR10844">
    <property type="entry name" value="CAVEOLIN"/>
    <property type="match status" value="1"/>
</dbReference>
<dbReference type="PANTHER" id="PTHR10844:SF3">
    <property type="entry name" value="CAVEOLIN-2"/>
    <property type="match status" value="1"/>
</dbReference>
<dbReference type="Pfam" id="PF01146">
    <property type="entry name" value="Caveolin"/>
    <property type="match status" value="1"/>
</dbReference>
<dbReference type="PROSITE" id="PS01210">
    <property type="entry name" value="CAVEOLIN"/>
    <property type="match status" value="1"/>
</dbReference>
<gene>
    <name type="primary">CAV2</name>
</gene>
<sequence>MGLETEKADVQLFMDDDSYSHHSGVDYGDPEKFVDSGQDRDPHRLNSQLKVGFEDVIAEPVTTHSFDKVWICSHALFEISKYVLYKFLTVFLAIPLAFVAGILFATLSCLHIWIIMPFVKTCLMVLPSVQTIWKSVTDVIIAPLCTSVGRSFSSISLRLSQD</sequence>
<evidence type="ECO:0000250" key="1"/>
<evidence type="ECO:0000250" key="2">
    <source>
        <dbReference type="UniProtKB" id="P51636"/>
    </source>
</evidence>
<evidence type="ECO:0000250" key="3">
    <source>
        <dbReference type="UniProtKB" id="Q9WVC3"/>
    </source>
</evidence>
<evidence type="ECO:0000255" key="4"/>
<evidence type="ECO:0000305" key="5"/>